<organism>
    <name type="scientific">Saimiri sciureus</name>
    <name type="common">Common squirrel monkey</name>
    <dbReference type="NCBI Taxonomy" id="9521"/>
    <lineage>
        <taxon>Eukaryota</taxon>
        <taxon>Metazoa</taxon>
        <taxon>Chordata</taxon>
        <taxon>Craniata</taxon>
        <taxon>Vertebrata</taxon>
        <taxon>Euteleostomi</taxon>
        <taxon>Mammalia</taxon>
        <taxon>Eutheria</taxon>
        <taxon>Euarchontoglires</taxon>
        <taxon>Primates</taxon>
        <taxon>Haplorrhini</taxon>
        <taxon>Platyrrhini</taxon>
        <taxon>Cebidae</taxon>
        <taxon>Saimiriinae</taxon>
        <taxon>Saimiri</taxon>
    </lineage>
</organism>
<evidence type="ECO:0000250" key="1">
    <source>
        <dbReference type="UniProtKB" id="P00423"/>
    </source>
</evidence>
<evidence type="ECO:0000250" key="2">
    <source>
        <dbReference type="UniProtKB" id="P00424"/>
    </source>
</evidence>
<evidence type="ECO:0000250" key="3">
    <source>
        <dbReference type="UniProtKB" id="P10888"/>
    </source>
</evidence>
<evidence type="ECO:0000250" key="4">
    <source>
        <dbReference type="UniProtKB" id="P13073"/>
    </source>
</evidence>
<evidence type="ECO:0000250" key="5">
    <source>
        <dbReference type="UniProtKB" id="P19783"/>
    </source>
</evidence>
<evidence type="ECO:0000305" key="6"/>
<reference key="1">
    <citation type="journal article" date="1997" name="J. Mol. Evol.">
        <title>Molecular evolution of cytochrome c oxidase subunit IV: evidence for positive selection in simian primates.</title>
        <authorList>
            <person name="Wu W."/>
            <person name="Goodman M."/>
            <person name="Lomax M.I."/>
            <person name="Grossman L.I."/>
        </authorList>
    </citation>
    <scope>NUCLEOTIDE SEQUENCE [GENOMIC DNA]</scope>
</reference>
<comment type="function">
    <text evidence="2">Component of the cytochrome c oxidase, the last enzyme in the mitochondrial electron transport chain which drives oxidative phosphorylation. The respiratory chain contains 3 multisubunit complexes succinate dehydrogenase (complex II, CII), ubiquinol-cytochrome c oxidoreductase (cytochrome b-c1 complex, complex III, CIII) and cytochrome c oxidase (complex IV, CIV), that cooperate to transfer electrons derived from NADH and succinate to molecular oxygen, creating an electrochemical gradient over the inner membrane that drives transmembrane transport and the ATP synthase. Cytochrome c oxidase is the component of the respiratory chain that catalyzes the reduction of oxygen to water. Electrons originating from reduced cytochrome c in the intermembrane space (IMS) are transferred via the dinuclear copper A center (CU(A)) of subunit 2 and heme A of subunit 1 to the active site in subunit 1, a binuclear center (BNC) formed by heme A3 and copper B (CU(B)). The BNC reduces molecular oxygen to 2 water molecules using 4 electrons from cytochrome c in the IMS and 4 protons from the mitochondrial matrix.</text>
</comment>
<comment type="pathway">
    <text evidence="2">Energy metabolism; oxidative phosphorylation.</text>
</comment>
<comment type="subunit">
    <text evidence="1 3 4 5">Component of the cytochrome c oxidase (complex IV, CIV), a multisubunit enzyme composed of 14 subunits. The complex is composed of a catalytic core of 3 subunits MT-CO1, MT-CO2 and MT-CO3, encoded in the mitochondrial DNA, and 11 supernumerary subunits COX4I, COX5A, COX5B, COX6A, COX6B, COX6C, COX7A, COX7B, COX7C, COX8 and NDUFA4, which are encoded in the nuclear genome. The complex exists as a monomer or a dimer and forms supercomplexes (SCs) in the inner mitochondrial membrane with NADH-ubiquinone oxidoreductase (complex I, CI) and ubiquinol-cytochrome c oxidoreductase (cytochrome b-c1 complex, complex III, CIII), resulting in different assemblies (supercomplex SCI(1)III(2)IV(1) and megacomplex MCI(2)III(2)IV(2)) (By similarity). Interacts with PHB2; the interaction decreases in absence of SPHK2 (By similarity). Interacts with AFG1L (By similarity). Interacts with ABCB7; this interaction allows the regulation of cellular iron homeostasis and cellular reactive oxygen species (ROS) levels in cardiomyocytes (By similarity). Interacts with FLVCR2; this interaction occurs in the absence of heme and is disrupted upon heme binding. Interacts with IRGC (By similarity).</text>
</comment>
<comment type="subcellular location">
    <subcellularLocation>
        <location evidence="1">Mitochondrion inner membrane</location>
        <topology evidence="1">Single-pass membrane protein</topology>
    </subcellularLocation>
</comment>
<comment type="similarity">
    <text evidence="6">Belongs to the cytochrome c oxidase IV family.</text>
</comment>
<dbReference type="EMBL" id="AF042762">
    <property type="protein sequence ID" value="AAC02988.1"/>
    <property type="molecule type" value="Genomic_DNA"/>
</dbReference>
<dbReference type="EMBL" id="AF042764">
    <property type="protein sequence ID" value="AAC02989.1"/>
    <property type="molecule type" value="Genomic_DNA"/>
</dbReference>
<dbReference type="EMBL" id="AF042763">
    <property type="protein sequence ID" value="AAC02989.1"/>
    <property type="status" value="JOINED"/>
    <property type="molecule type" value="Genomic_DNA"/>
</dbReference>
<dbReference type="SMR" id="O46582"/>
<dbReference type="UniPathway" id="UPA00705"/>
<dbReference type="GO" id="GO:0005743">
    <property type="term" value="C:mitochondrial inner membrane"/>
    <property type="evidence" value="ECO:0000250"/>
    <property type="project" value="UniProtKB"/>
</dbReference>
<dbReference type="GO" id="GO:0045277">
    <property type="term" value="C:respiratory chain complex IV"/>
    <property type="evidence" value="ECO:0007669"/>
    <property type="project" value="InterPro"/>
</dbReference>
<dbReference type="GO" id="GO:0006123">
    <property type="term" value="P:mitochondrial electron transport, cytochrome c to oxygen"/>
    <property type="evidence" value="ECO:0007669"/>
    <property type="project" value="InterPro"/>
</dbReference>
<dbReference type="CDD" id="cd00922">
    <property type="entry name" value="Cyt_c_Oxidase_IV"/>
    <property type="match status" value="1"/>
</dbReference>
<dbReference type="FunFam" id="1.10.442.10:FF:000005">
    <property type="match status" value="1"/>
</dbReference>
<dbReference type="Gene3D" id="1.10.442.10">
    <property type="entry name" value="Cytochrome c oxidase subunit IV"/>
    <property type="match status" value="2"/>
</dbReference>
<dbReference type="InterPro" id="IPR004203">
    <property type="entry name" value="Cyt_c_oxidase_su4_fam"/>
</dbReference>
<dbReference type="InterPro" id="IPR036639">
    <property type="entry name" value="Cyt_c_oxidase_su4_sf"/>
</dbReference>
<dbReference type="PANTHER" id="PTHR10707:SF12">
    <property type="entry name" value="CYTOCHROME C OXIDASE SUBUNIT 4 ISOFORM 1, MITOCHONDRIAL"/>
    <property type="match status" value="1"/>
</dbReference>
<dbReference type="PANTHER" id="PTHR10707">
    <property type="entry name" value="CYTOCHROME C OXIDASE SUBUNIT IV"/>
    <property type="match status" value="1"/>
</dbReference>
<dbReference type="Pfam" id="PF02936">
    <property type="entry name" value="COX4"/>
    <property type="match status" value="2"/>
</dbReference>
<dbReference type="SUPFAM" id="SSF81406">
    <property type="entry name" value="Mitochondrial cytochrome c oxidase subunit IV"/>
    <property type="match status" value="1"/>
</dbReference>
<keyword id="KW-0007">Acetylation</keyword>
<keyword id="KW-0472">Membrane</keyword>
<keyword id="KW-0496">Mitochondrion</keyword>
<keyword id="KW-0999">Mitochondrion inner membrane</keyword>
<keyword id="KW-0597">Phosphoprotein</keyword>
<keyword id="KW-0812">Transmembrane</keyword>
<keyword id="KW-1133">Transmembrane helix</keyword>
<protein>
    <recommendedName>
        <fullName>Cytochrome c oxidase subunit 4 isoform 1, mitochondrial</fullName>
    </recommendedName>
    <alternativeName>
        <fullName>Cytochrome c oxidase polypeptide IV</fullName>
    </alternativeName>
    <alternativeName>
        <fullName>Cytochrome c oxidase subunit IV isoform 1</fullName>
        <shortName>COX IV-1</shortName>
    </alternativeName>
</protein>
<sequence length="124" mass="14426">SVVKSEDYARPSYVDRRDYPLPDVAHVRHLSASQKALKEKEKASWSSLSMDEKVEKTVVGAAMFFIGFTAILVILEKRYVYGPLPHTFDKEWVAMQTKRMLDLKMNPIDGLASKWDYEKKEWKK</sequence>
<gene>
    <name type="primary">COX4I1</name>
    <name type="synonym">COX4</name>
</gene>
<name>COX41_SAISC</name>
<accession>O46582</accession>
<accession>O46583</accession>
<feature type="chain" id="PRO_0000194082" description="Cytochrome c oxidase subunit 4 isoform 1, mitochondrial">
    <location>
        <begin position="1" status="less than"/>
        <end position="124"/>
    </location>
</feature>
<feature type="modified residue" description="N6-acetyllysine; alternate" evidence="5">
    <location>
        <position position="4"/>
    </location>
</feature>
<feature type="modified residue" description="N6-succinyllysine; alternate" evidence="5">
    <location>
        <position position="4"/>
    </location>
</feature>
<feature type="modified residue" description="Phosphoserine" evidence="3">
    <location>
        <position position="31"/>
    </location>
</feature>
<feature type="modified residue" description="Phosphoserine" evidence="3">
    <location>
        <position position="33"/>
    </location>
</feature>
<feature type="modified residue" description="N6-acetyllysine; alternate" evidence="4">
    <location>
        <position position="35"/>
    </location>
</feature>
<feature type="modified residue" description="N6-succinyllysine; alternate" evidence="5">
    <location>
        <position position="35"/>
    </location>
</feature>
<feature type="modified residue" description="N6-acetyllysine" evidence="5">
    <location>
        <position position="42"/>
    </location>
</feature>
<feature type="non-consecutive residues" evidence="6">
    <location>
        <begin position="55"/>
        <end position="56"/>
    </location>
</feature>
<feature type="non-terminal residue">
    <location>
        <position position="1"/>
    </location>
</feature>
<proteinExistence type="inferred from homology"/>